<protein>
    <recommendedName>
        <fullName evidence="1">Chaperone protein DnaJ</fullName>
    </recommendedName>
</protein>
<feature type="chain" id="PRO_0000070844" description="Chaperone protein DnaJ">
    <location>
        <begin position="1"/>
        <end position="375"/>
    </location>
</feature>
<feature type="domain" description="J" evidence="1">
    <location>
        <begin position="5"/>
        <end position="69"/>
    </location>
</feature>
<feature type="repeat" description="CXXCXGXG motif">
    <location>
        <begin position="144"/>
        <end position="151"/>
    </location>
</feature>
<feature type="repeat" description="CXXCXGXG motif">
    <location>
        <begin position="161"/>
        <end position="168"/>
    </location>
</feature>
<feature type="repeat" description="CXXCXGXG motif">
    <location>
        <begin position="187"/>
        <end position="194"/>
    </location>
</feature>
<feature type="repeat" description="CXXCXGXG motif">
    <location>
        <begin position="201"/>
        <end position="208"/>
    </location>
</feature>
<feature type="zinc finger region" description="CR-type" evidence="1">
    <location>
        <begin position="131"/>
        <end position="213"/>
    </location>
</feature>
<feature type="binding site" evidence="1">
    <location>
        <position position="144"/>
    </location>
    <ligand>
        <name>Zn(2+)</name>
        <dbReference type="ChEBI" id="CHEBI:29105"/>
        <label>1</label>
    </ligand>
</feature>
<feature type="binding site" evidence="1">
    <location>
        <position position="147"/>
    </location>
    <ligand>
        <name>Zn(2+)</name>
        <dbReference type="ChEBI" id="CHEBI:29105"/>
        <label>1</label>
    </ligand>
</feature>
<feature type="binding site" evidence="1">
    <location>
        <position position="161"/>
    </location>
    <ligand>
        <name>Zn(2+)</name>
        <dbReference type="ChEBI" id="CHEBI:29105"/>
        <label>2</label>
    </ligand>
</feature>
<feature type="binding site" evidence="1">
    <location>
        <position position="164"/>
    </location>
    <ligand>
        <name>Zn(2+)</name>
        <dbReference type="ChEBI" id="CHEBI:29105"/>
        <label>2</label>
    </ligand>
</feature>
<feature type="binding site" evidence="1">
    <location>
        <position position="187"/>
    </location>
    <ligand>
        <name>Zn(2+)</name>
        <dbReference type="ChEBI" id="CHEBI:29105"/>
        <label>2</label>
    </ligand>
</feature>
<feature type="binding site" evidence="1">
    <location>
        <position position="190"/>
    </location>
    <ligand>
        <name>Zn(2+)</name>
        <dbReference type="ChEBI" id="CHEBI:29105"/>
        <label>2</label>
    </ligand>
</feature>
<feature type="binding site" evidence="1">
    <location>
        <position position="201"/>
    </location>
    <ligand>
        <name>Zn(2+)</name>
        <dbReference type="ChEBI" id="CHEBI:29105"/>
        <label>1</label>
    </ligand>
</feature>
<feature type="binding site" evidence="1">
    <location>
        <position position="204"/>
    </location>
    <ligand>
        <name>Zn(2+)</name>
        <dbReference type="ChEBI" id="CHEBI:29105"/>
        <label>1</label>
    </ligand>
</feature>
<accession>Q8CXD3</accession>
<evidence type="ECO:0000255" key="1">
    <source>
        <dbReference type="HAMAP-Rule" id="MF_01152"/>
    </source>
</evidence>
<dbReference type="EMBL" id="BA000028">
    <property type="protein sequence ID" value="BAC13923.1"/>
    <property type="molecule type" value="Genomic_DNA"/>
</dbReference>
<dbReference type="RefSeq" id="WP_011066364.1">
    <property type="nucleotide sequence ID" value="NC_004193.1"/>
</dbReference>
<dbReference type="SMR" id="Q8CXD3"/>
<dbReference type="STRING" id="221109.gene:10734213"/>
<dbReference type="KEGG" id="oih:OB1967"/>
<dbReference type="eggNOG" id="COG0484">
    <property type="taxonomic scope" value="Bacteria"/>
</dbReference>
<dbReference type="HOGENOM" id="CLU_017633_0_7_9"/>
<dbReference type="OrthoDB" id="9779889at2"/>
<dbReference type="PhylomeDB" id="Q8CXD3"/>
<dbReference type="Proteomes" id="UP000000822">
    <property type="component" value="Chromosome"/>
</dbReference>
<dbReference type="GO" id="GO:0005737">
    <property type="term" value="C:cytoplasm"/>
    <property type="evidence" value="ECO:0007669"/>
    <property type="project" value="UniProtKB-SubCell"/>
</dbReference>
<dbReference type="GO" id="GO:0005524">
    <property type="term" value="F:ATP binding"/>
    <property type="evidence" value="ECO:0007669"/>
    <property type="project" value="InterPro"/>
</dbReference>
<dbReference type="GO" id="GO:0031072">
    <property type="term" value="F:heat shock protein binding"/>
    <property type="evidence" value="ECO:0007669"/>
    <property type="project" value="InterPro"/>
</dbReference>
<dbReference type="GO" id="GO:0051082">
    <property type="term" value="F:unfolded protein binding"/>
    <property type="evidence" value="ECO:0007669"/>
    <property type="project" value="UniProtKB-UniRule"/>
</dbReference>
<dbReference type="GO" id="GO:0008270">
    <property type="term" value="F:zinc ion binding"/>
    <property type="evidence" value="ECO:0007669"/>
    <property type="project" value="UniProtKB-UniRule"/>
</dbReference>
<dbReference type="GO" id="GO:0051085">
    <property type="term" value="P:chaperone cofactor-dependent protein refolding"/>
    <property type="evidence" value="ECO:0007669"/>
    <property type="project" value="TreeGrafter"/>
</dbReference>
<dbReference type="GO" id="GO:0006260">
    <property type="term" value="P:DNA replication"/>
    <property type="evidence" value="ECO:0007669"/>
    <property type="project" value="UniProtKB-KW"/>
</dbReference>
<dbReference type="GO" id="GO:0042026">
    <property type="term" value="P:protein refolding"/>
    <property type="evidence" value="ECO:0007669"/>
    <property type="project" value="TreeGrafter"/>
</dbReference>
<dbReference type="GO" id="GO:0009408">
    <property type="term" value="P:response to heat"/>
    <property type="evidence" value="ECO:0007669"/>
    <property type="project" value="InterPro"/>
</dbReference>
<dbReference type="CDD" id="cd06257">
    <property type="entry name" value="DnaJ"/>
    <property type="match status" value="1"/>
</dbReference>
<dbReference type="CDD" id="cd10747">
    <property type="entry name" value="DnaJ_C"/>
    <property type="match status" value="1"/>
</dbReference>
<dbReference type="CDD" id="cd10719">
    <property type="entry name" value="DnaJ_zf"/>
    <property type="match status" value="1"/>
</dbReference>
<dbReference type="FunFam" id="1.10.287.110:FF:000031">
    <property type="entry name" value="Molecular chaperone DnaJ"/>
    <property type="match status" value="1"/>
</dbReference>
<dbReference type="FunFam" id="2.10.230.10:FF:000002">
    <property type="entry name" value="Molecular chaperone DnaJ"/>
    <property type="match status" value="1"/>
</dbReference>
<dbReference type="FunFam" id="2.60.260.20:FF:000004">
    <property type="entry name" value="Molecular chaperone DnaJ"/>
    <property type="match status" value="1"/>
</dbReference>
<dbReference type="Gene3D" id="1.10.287.110">
    <property type="entry name" value="DnaJ domain"/>
    <property type="match status" value="1"/>
</dbReference>
<dbReference type="Gene3D" id="2.10.230.10">
    <property type="entry name" value="Heat shock protein DnaJ, cysteine-rich domain"/>
    <property type="match status" value="1"/>
</dbReference>
<dbReference type="Gene3D" id="2.60.260.20">
    <property type="entry name" value="Urease metallochaperone UreE, N-terminal domain"/>
    <property type="match status" value="2"/>
</dbReference>
<dbReference type="HAMAP" id="MF_01152">
    <property type="entry name" value="DnaJ"/>
    <property type="match status" value="1"/>
</dbReference>
<dbReference type="InterPro" id="IPR012724">
    <property type="entry name" value="DnaJ"/>
</dbReference>
<dbReference type="InterPro" id="IPR002939">
    <property type="entry name" value="DnaJ_C"/>
</dbReference>
<dbReference type="InterPro" id="IPR001623">
    <property type="entry name" value="DnaJ_domain"/>
</dbReference>
<dbReference type="InterPro" id="IPR018253">
    <property type="entry name" value="DnaJ_domain_CS"/>
</dbReference>
<dbReference type="InterPro" id="IPR008971">
    <property type="entry name" value="HSP40/DnaJ_pept-bd"/>
</dbReference>
<dbReference type="InterPro" id="IPR001305">
    <property type="entry name" value="HSP_DnaJ_Cys-rich_dom"/>
</dbReference>
<dbReference type="InterPro" id="IPR036410">
    <property type="entry name" value="HSP_DnaJ_Cys-rich_dom_sf"/>
</dbReference>
<dbReference type="InterPro" id="IPR036869">
    <property type="entry name" value="J_dom_sf"/>
</dbReference>
<dbReference type="NCBIfam" id="TIGR02349">
    <property type="entry name" value="DnaJ_bact"/>
    <property type="match status" value="1"/>
</dbReference>
<dbReference type="NCBIfam" id="NF008035">
    <property type="entry name" value="PRK10767.1"/>
    <property type="match status" value="1"/>
</dbReference>
<dbReference type="NCBIfam" id="NF010873">
    <property type="entry name" value="PRK14280.1"/>
    <property type="match status" value="1"/>
</dbReference>
<dbReference type="PANTHER" id="PTHR43096:SF48">
    <property type="entry name" value="CHAPERONE PROTEIN DNAJ"/>
    <property type="match status" value="1"/>
</dbReference>
<dbReference type="PANTHER" id="PTHR43096">
    <property type="entry name" value="DNAJ HOMOLOG 1, MITOCHONDRIAL-RELATED"/>
    <property type="match status" value="1"/>
</dbReference>
<dbReference type="Pfam" id="PF00226">
    <property type="entry name" value="DnaJ"/>
    <property type="match status" value="1"/>
</dbReference>
<dbReference type="Pfam" id="PF01556">
    <property type="entry name" value="DnaJ_C"/>
    <property type="match status" value="1"/>
</dbReference>
<dbReference type="Pfam" id="PF00684">
    <property type="entry name" value="DnaJ_CXXCXGXG"/>
    <property type="match status" value="1"/>
</dbReference>
<dbReference type="PRINTS" id="PR00625">
    <property type="entry name" value="JDOMAIN"/>
</dbReference>
<dbReference type="SMART" id="SM00271">
    <property type="entry name" value="DnaJ"/>
    <property type="match status" value="1"/>
</dbReference>
<dbReference type="SUPFAM" id="SSF46565">
    <property type="entry name" value="Chaperone J-domain"/>
    <property type="match status" value="1"/>
</dbReference>
<dbReference type="SUPFAM" id="SSF57938">
    <property type="entry name" value="DnaJ/Hsp40 cysteine-rich domain"/>
    <property type="match status" value="1"/>
</dbReference>
<dbReference type="SUPFAM" id="SSF49493">
    <property type="entry name" value="HSP40/DnaJ peptide-binding domain"/>
    <property type="match status" value="2"/>
</dbReference>
<dbReference type="PROSITE" id="PS00636">
    <property type="entry name" value="DNAJ_1"/>
    <property type="match status" value="1"/>
</dbReference>
<dbReference type="PROSITE" id="PS50076">
    <property type="entry name" value="DNAJ_2"/>
    <property type="match status" value="1"/>
</dbReference>
<dbReference type="PROSITE" id="PS51188">
    <property type="entry name" value="ZF_CR"/>
    <property type="match status" value="1"/>
</dbReference>
<name>DNAJ_OCEIH</name>
<proteinExistence type="inferred from homology"/>
<sequence>MGKRDYYEILGIDKSASQDEIKKNYRKLARKYHPDVNKEADAAEKFKEVKEAYEVLSDDQKRAQYDQFGHSGPQSQGFGGFGGGAQDFGGFGDIFDMFFGGGGRSRDPNAPQQGNDLQYTMILDFEEAVFGKETDIEIPKEESCDTCNGSGAKPGTKPETCSHCHGSGQLNQEQNTPFGRVVNRRVCNYCQGTGKIIPDKCNTCGGSGTVQKNKKIHISIPAGIDEGQQIRVAGKGESGKNGGPAGDLFVVIKVRPHDFFVREGDHIFCELPLTYAQAALGDELEVPTVHGKVKVKVPAGTQTGKTFRIKGKGAPNVRGRGHGDQHIKIKVMTPTNLSEKQKDLLREFNELGGNESTDEQDDNIFQRFRRAFKGE</sequence>
<organism>
    <name type="scientific">Oceanobacillus iheyensis (strain DSM 14371 / CIP 107618 / JCM 11309 / KCTC 3954 / HTE831)</name>
    <dbReference type="NCBI Taxonomy" id="221109"/>
    <lineage>
        <taxon>Bacteria</taxon>
        <taxon>Bacillati</taxon>
        <taxon>Bacillota</taxon>
        <taxon>Bacilli</taxon>
        <taxon>Bacillales</taxon>
        <taxon>Bacillaceae</taxon>
        <taxon>Oceanobacillus</taxon>
    </lineage>
</organism>
<gene>
    <name evidence="1" type="primary">dnaJ</name>
    <name type="ordered locus">OB1967</name>
</gene>
<reference key="1">
    <citation type="journal article" date="2002" name="Nucleic Acids Res.">
        <title>Genome sequence of Oceanobacillus iheyensis isolated from the Iheya Ridge and its unexpected adaptive capabilities to extreme environments.</title>
        <authorList>
            <person name="Takami H."/>
            <person name="Takaki Y."/>
            <person name="Uchiyama I."/>
        </authorList>
    </citation>
    <scope>NUCLEOTIDE SEQUENCE [LARGE SCALE GENOMIC DNA]</scope>
    <source>
        <strain>DSM 14371 / CIP 107618 / JCM 11309 / KCTC 3954 / HTE831</strain>
    </source>
</reference>
<keyword id="KW-0143">Chaperone</keyword>
<keyword id="KW-0963">Cytoplasm</keyword>
<keyword id="KW-0235">DNA replication</keyword>
<keyword id="KW-0479">Metal-binding</keyword>
<keyword id="KW-1185">Reference proteome</keyword>
<keyword id="KW-0677">Repeat</keyword>
<keyword id="KW-0346">Stress response</keyword>
<keyword id="KW-0862">Zinc</keyword>
<keyword id="KW-0863">Zinc-finger</keyword>
<comment type="function">
    <text evidence="1">Participates actively in the response to hyperosmotic and heat shock by preventing the aggregation of stress-denatured proteins and by disaggregating proteins, also in an autonomous, DnaK-independent fashion. Unfolded proteins bind initially to DnaJ; upon interaction with the DnaJ-bound protein, DnaK hydrolyzes its bound ATP, resulting in the formation of a stable complex. GrpE releases ADP from DnaK; ATP binding to DnaK triggers the release of the substrate protein, thus completing the reaction cycle. Several rounds of ATP-dependent interactions between DnaJ, DnaK and GrpE are required for fully efficient folding. Also involved, together with DnaK and GrpE, in the DNA replication of plasmids through activation of initiation proteins.</text>
</comment>
<comment type="cofactor">
    <cofactor evidence="1">
        <name>Zn(2+)</name>
        <dbReference type="ChEBI" id="CHEBI:29105"/>
    </cofactor>
    <text evidence="1">Binds 2 Zn(2+) ions per monomer.</text>
</comment>
<comment type="subunit">
    <text evidence="1">Homodimer.</text>
</comment>
<comment type="subcellular location">
    <subcellularLocation>
        <location evidence="1">Cytoplasm</location>
    </subcellularLocation>
</comment>
<comment type="domain">
    <text evidence="1">The J domain is necessary and sufficient to stimulate DnaK ATPase activity. Zinc center 1 plays an important role in the autonomous, DnaK-independent chaperone activity of DnaJ. Zinc center 2 is essential for interaction with DnaK and for DnaJ activity.</text>
</comment>
<comment type="similarity">
    <text evidence="1">Belongs to the DnaJ family.</text>
</comment>